<reference key="1">
    <citation type="journal article" date="2000" name="J. Biol. Chem.">
        <title>Cloning and recombinant expression of a structurally novel human secreted phospholipase A2.</title>
        <authorList>
            <person name="Gelb M.H."/>
            <person name="Valentin E."/>
            <person name="Ghomashchi F."/>
            <person name="Lazdunski M."/>
            <person name="Lambeau G."/>
        </authorList>
    </citation>
    <scope>NUCLEOTIDE SEQUENCE [MRNA]</scope>
    <scope>CHARACTERIZATION</scope>
    <scope>MASS SPECTROMETRY</scope>
</reference>
<reference key="2">
    <citation type="submission" date="2001-01" db="EMBL/GenBank/DDBJ databases">
        <title>Identification of FKSG38, a novel gene located on human chromosome 4q25.</title>
        <authorList>
            <person name="Wang Y.-G."/>
            <person name="Gong L."/>
        </authorList>
    </citation>
    <scope>NUCLEOTIDE SEQUENCE [MRNA]</scope>
</reference>
<reference key="3">
    <citation type="journal article" date="2003" name="Genome Res.">
        <title>The secreted protein discovery initiative (SPDI), a large-scale effort to identify novel human secreted and transmembrane proteins: a bioinformatics assessment.</title>
        <authorList>
            <person name="Clark H.F."/>
            <person name="Gurney A.L."/>
            <person name="Abaya E."/>
            <person name="Baker K."/>
            <person name="Baldwin D.T."/>
            <person name="Brush J."/>
            <person name="Chen J."/>
            <person name="Chow B."/>
            <person name="Chui C."/>
            <person name="Crowley C."/>
            <person name="Currell B."/>
            <person name="Deuel B."/>
            <person name="Dowd P."/>
            <person name="Eaton D."/>
            <person name="Foster J.S."/>
            <person name="Grimaldi C."/>
            <person name="Gu Q."/>
            <person name="Hass P.E."/>
            <person name="Heldens S."/>
            <person name="Huang A."/>
            <person name="Kim H.S."/>
            <person name="Klimowski L."/>
            <person name="Jin Y."/>
            <person name="Johnson S."/>
            <person name="Lee J."/>
            <person name="Lewis L."/>
            <person name="Liao D."/>
            <person name="Mark M.R."/>
            <person name="Robbie E."/>
            <person name="Sanchez C."/>
            <person name="Schoenfeld J."/>
            <person name="Seshagiri S."/>
            <person name="Simmons L."/>
            <person name="Singh J."/>
            <person name="Smith V."/>
            <person name="Stinson J."/>
            <person name="Vagts A."/>
            <person name="Vandlen R.L."/>
            <person name="Watanabe C."/>
            <person name="Wieand D."/>
            <person name="Woods K."/>
            <person name="Xie M.-H."/>
            <person name="Yansura D.G."/>
            <person name="Yi S."/>
            <person name="Yu G."/>
            <person name="Yuan J."/>
            <person name="Zhang M."/>
            <person name="Zhang Z."/>
            <person name="Goddard A.D."/>
            <person name="Wood W.I."/>
            <person name="Godowski P.J."/>
            <person name="Gray A.M."/>
        </authorList>
    </citation>
    <scope>NUCLEOTIDE SEQUENCE [LARGE SCALE MRNA]</scope>
</reference>
<reference key="4">
    <citation type="journal article" date="2004" name="Genome Res.">
        <title>The status, quality, and expansion of the NIH full-length cDNA project: the Mammalian Gene Collection (MGC).</title>
        <authorList>
            <consortium name="The MGC Project Team"/>
        </authorList>
    </citation>
    <scope>NUCLEOTIDE SEQUENCE [LARGE SCALE MRNA]</scope>
    <source>
        <tissue>Uterus</tissue>
    </source>
</reference>
<reference key="5">
    <citation type="journal article" date="2003" name="J. Biol. Chem.">
        <title>Cellular arachidonate-releasing function of novel classes of secretory phospholipase A2s (groups III and XII).</title>
        <authorList>
            <person name="Murakami M."/>
            <person name="Masuda S."/>
            <person name="Shimbara S."/>
            <person name="Bezzine S."/>
            <person name="Lazdunski M."/>
            <person name="Lambeau G."/>
            <person name="Gelb M.H."/>
            <person name="Matsukura S."/>
            <person name="Kokubu F."/>
            <person name="Adachi M."/>
            <person name="Kudo I."/>
        </authorList>
    </citation>
    <scope>FUNCTION</scope>
    <scope>SUBCELLULAR LOCATION</scope>
</reference>
<feature type="signal peptide" evidence="5">
    <location>
        <begin position="1"/>
        <end position="22"/>
    </location>
</feature>
<feature type="chain" id="PRO_0000022770" description="Group XIIA secretory phospholipase A2">
    <location>
        <begin position="23"/>
        <end position="189"/>
    </location>
</feature>
<feature type="active site" evidence="2">
    <location>
        <position position="110"/>
    </location>
</feature>
<feature type="active site" evidence="2">
    <location>
        <position position="125"/>
    </location>
</feature>
<feature type="binding site" evidence="1">
    <location>
        <position position="88"/>
    </location>
    <ligand>
        <name>Ca(2+)</name>
        <dbReference type="ChEBI" id="CHEBI:29108"/>
    </ligand>
</feature>
<feature type="binding site" evidence="1">
    <location>
        <position position="90"/>
    </location>
    <ligand>
        <name>Ca(2+)</name>
        <dbReference type="ChEBI" id="CHEBI:29108"/>
    </ligand>
</feature>
<feature type="binding site" evidence="1">
    <location>
        <position position="92"/>
    </location>
    <ligand>
        <name>Ca(2+)</name>
        <dbReference type="ChEBI" id="CHEBI:29108"/>
    </ligand>
</feature>
<feature type="binding site" evidence="1">
    <location>
        <position position="111"/>
    </location>
    <ligand>
        <name>Ca(2+)</name>
        <dbReference type="ChEBI" id="CHEBI:29108"/>
    </ligand>
</feature>
<feature type="sequence conflict" description="In Ref. 2; AAG50289." evidence="5" ref="2">
    <location>
        <begin position="94"/>
        <end position="95"/>
    </location>
</feature>
<comment type="function">
    <text evidence="4">PA2 catalyzes the calcium-dependent hydrolysis of the 2-acyl groups in 3-sn-phosphoglycerides. Does not exhibit detectable activity toward sn-2-arachidonoyl- or linoleoyl-phosphatidylcholine or -phosphatidylethanolamine.</text>
</comment>
<comment type="catalytic activity">
    <reaction evidence="2">
        <text>a 1,2-diacyl-sn-glycero-3-phosphocholine + H2O = a 1-acyl-sn-glycero-3-phosphocholine + a fatty acid + H(+)</text>
        <dbReference type="Rhea" id="RHEA:15801"/>
        <dbReference type="ChEBI" id="CHEBI:15377"/>
        <dbReference type="ChEBI" id="CHEBI:15378"/>
        <dbReference type="ChEBI" id="CHEBI:28868"/>
        <dbReference type="ChEBI" id="CHEBI:57643"/>
        <dbReference type="ChEBI" id="CHEBI:58168"/>
        <dbReference type="EC" id="3.1.1.4"/>
    </reaction>
</comment>
<comment type="cofactor">
    <cofactor evidence="1">
        <name>Ca(2+)</name>
        <dbReference type="ChEBI" id="CHEBI:29108"/>
    </cofactor>
    <text evidence="1">Binds 1 Ca(2+) ion per subunit.</text>
</comment>
<comment type="interaction">
    <interactant intactId="EBI-3916751">
        <id>Q9BZM1</id>
    </interactant>
    <interactant intactId="EBI-747754">
        <id>P28799</id>
        <label>GRN</label>
    </interactant>
    <organismsDiffer>false</organismsDiffer>
    <experiments>3</experiments>
</comment>
<comment type="interaction">
    <interactant intactId="EBI-3916751">
        <id>Q9BZM1</id>
    </interactant>
    <interactant intactId="EBI-720609">
        <id>O76024</id>
        <label>WFS1</label>
    </interactant>
    <organismsDiffer>false</organismsDiffer>
    <experiments>3</experiments>
</comment>
<comment type="subcellular location">
    <subcellularLocation>
        <location evidence="4">Secreted</location>
    </subcellularLocation>
    <subcellularLocation>
        <location evidence="4">Cytoplasm</location>
    </subcellularLocation>
</comment>
<comment type="tissue specificity">
    <text>Abundantly expressed in heart, skeletal muscle, kidney, liver and pancreas.</text>
</comment>
<comment type="mass spectrometry"/>
<comment type="similarity">
    <text evidence="5">Belongs to the phospholipase A2 family.</text>
</comment>
<keyword id="KW-0106">Calcium</keyword>
<keyword id="KW-0963">Cytoplasm</keyword>
<keyword id="KW-0378">Hydrolase</keyword>
<keyword id="KW-0442">Lipid degradation</keyword>
<keyword id="KW-0443">Lipid metabolism</keyword>
<keyword id="KW-0479">Metal-binding</keyword>
<keyword id="KW-1267">Proteomics identification</keyword>
<keyword id="KW-1185">Reference proteome</keyword>
<keyword id="KW-0964">Secreted</keyword>
<keyword id="KW-0732">Signal</keyword>
<name>PG12A_HUMAN</name>
<organism>
    <name type="scientific">Homo sapiens</name>
    <name type="common">Human</name>
    <dbReference type="NCBI Taxonomy" id="9606"/>
    <lineage>
        <taxon>Eukaryota</taxon>
        <taxon>Metazoa</taxon>
        <taxon>Chordata</taxon>
        <taxon>Craniata</taxon>
        <taxon>Vertebrata</taxon>
        <taxon>Euteleostomi</taxon>
        <taxon>Mammalia</taxon>
        <taxon>Eutheria</taxon>
        <taxon>Euarchontoglires</taxon>
        <taxon>Primates</taxon>
        <taxon>Haplorrhini</taxon>
        <taxon>Catarrhini</taxon>
        <taxon>Hominidae</taxon>
        <taxon>Homo</taxon>
    </lineage>
</organism>
<proteinExistence type="evidence at protein level"/>
<evidence type="ECO:0000250" key="1"/>
<evidence type="ECO:0000255" key="2">
    <source>
        <dbReference type="PROSITE-ProRule" id="PRU10035"/>
    </source>
</evidence>
<evidence type="ECO:0000269" key="3">
    <source>
    </source>
</evidence>
<evidence type="ECO:0000269" key="4">
    <source>
    </source>
</evidence>
<evidence type="ECO:0000305" key="5"/>
<gene>
    <name type="primary">PLA2G12A</name>
    <name type="synonym">PLA2G12</name>
    <name type="ORF">FKSG38</name>
    <name type="ORF">UNQ2519/PRO6012</name>
</gene>
<sequence>MALLSRPALTLLLLLMAAVVRCQEQAQTTDWRATLKTIRNGVHKIDTYLNAALDLLGGEDGLCQYKCSDGSKPFPRYGYKPSPPNGCGSPLFGVHLNIGIPSLTKCCNQHDRCYETCGKSKNDCDEEFQYCLSKICRDVQKTLGLTQHVQACETTVELLFDSVIHLGCKPYLDSQRAACRCHYEEKTDL</sequence>
<dbReference type="EC" id="3.1.1.4"/>
<dbReference type="EMBL" id="AF306567">
    <property type="protein sequence ID" value="AAG50243.1"/>
    <property type="molecule type" value="mRNA"/>
</dbReference>
<dbReference type="EMBL" id="AF332892">
    <property type="protein sequence ID" value="AAG50289.1"/>
    <property type="molecule type" value="mRNA"/>
</dbReference>
<dbReference type="EMBL" id="AY359024">
    <property type="protein sequence ID" value="AAQ89383.1"/>
    <property type="molecule type" value="mRNA"/>
</dbReference>
<dbReference type="EMBL" id="BC017218">
    <property type="protein sequence ID" value="AAH17218.1"/>
    <property type="molecule type" value="mRNA"/>
</dbReference>
<dbReference type="CCDS" id="CCDS3686.1"/>
<dbReference type="RefSeq" id="NP_110448.2">
    <property type="nucleotide sequence ID" value="NM_030821.4"/>
</dbReference>
<dbReference type="SMR" id="Q9BZM1"/>
<dbReference type="BioGRID" id="123539">
    <property type="interactions" value="16"/>
</dbReference>
<dbReference type="FunCoup" id="Q9BZM1">
    <property type="interactions" value="684"/>
</dbReference>
<dbReference type="IntAct" id="Q9BZM1">
    <property type="interactions" value="15"/>
</dbReference>
<dbReference type="STRING" id="9606.ENSP00000243501"/>
<dbReference type="BindingDB" id="Q9BZM1"/>
<dbReference type="ChEMBL" id="CHEMBL6122"/>
<dbReference type="iPTMnet" id="Q9BZM1"/>
<dbReference type="PhosphoSitePlus" id="Q9BZM1"/>
<dbReference type="BioMuta" id="PLA2G12A"/>
<dbReference type="DMDM" id="20143881"/>
<dbReference type="jPOST" id="Q9BZM1"/>
<dbReference type="MassIVE" id="Q9BZM1"/>
<dbReference type="PaxDb" id="9606-ENSP00000243501"/>
<dbReference type="PeptideAtlas" id="Q9BZM1"/>
<dbReference type="ProteomicsDB" id="79873"/>
<dbReference type="Pumba" id="Q9BZM1"/>
<dbReference type="Antibodypedia" id="26354">
    <property type="antibodies" value="213 antibodies from 28 providers"/>
</dbReference>
<dbReference type="DNASU" id="81579"/>
<dbReference type="Ensembl" id="ENST00000243501.10">
    <property type="protein sequence ID" value="ENSP00000243501.5"/>
    <property type="gene ID" value="ENSG00000123739.11"/>
</dbReference>
<dbReference type="GeneID" id="81579"/>
<dbReference type="KEGG" id="hsa:81579"/>
<dbReference type="MANE-Select" id="ENST00000243501.10">
    <property type="protein sequence ID" value="ENSP00000243501.5"/>
    <property type="RefSeq nucleotide sequence ID" value="NM_030821.5"/>
    <property type="RefSeq protein sequence ID" value="NP_110448.2"/>
</dbReference>
<dbReference type="UCSC" id="uc003hzp.4">
    <property type="organism name" value="human"/>
</dbReference>
<dbReference type="AGR" id="HGNC:18554"/>
<dbReference type="CTD" id="81579"/>
<dbReference type="DisGeNET" id="81579"/>
<dbReference type="GeneCards" id="PLA2G12A"/>
<dbReference type="HGNC" id="HGNC:18554">
    <property type="gene designation" value="PLA2G12A"/>
</dbReference>
<dbReference type="HPA" id="ENSG00000123739">
    <property type="expression patterns" value="Low tissue specificity"/>
</dbReference>
<dbReference type="MIM" id="611652">
    <property type="type" value="gene"/>
</dbReference>
<dbReference type="neXtProt" id="NX_Q9BZM1"/>
<dbReference type="OpenTargets" id="ENSG00000123739"/>
<dbReference type="PharmGKB" id="PA38347"/>
<dbReference type="VEuPathDB" id="HostDB:ENSG00000123739"/>
<dbReference type="eggNOG" id="ENOG502QU22">
    <property type="taxonomic scope" value="Eukaryota"/>
</dbReference>
<dbReference type="GeneTree" id="ENSGT00390000008798"/>
<dbReference type="InParanoid" id="Q9BZM1"/>
<dbReference type="OMA" id="RAACMCQ"/>
<dbReference type="OrthoDB" id="3935740at2759"/>
<dbReference type="PAN-GO" id="Q9BZM1">
    <property type="GO annotations" value="1 GO annotation based on evolutionary models"/>
</dbReference>
<dbReference type="PhylomeDB" id="Q9BZM1"/>
<dbReference type="TreeFam" id="TF323302"/>
<dbReference type="PathwayCommons" id="Q9BZM1"/>
<dbReference type="Reactome" id="R-HSA-1482788">
    <property type="pathway name" value="Acyl chain remodelling of PC"/>
</dbReference>
<dbReference type="Reactome" id="R-HSA-1482801">
    <property type="pathway name" value="Acyl chain remodelling of PS"/>
</dbReference>
<dbReference type="Reactome" id="R-HSA-1482839">
    <property type="pathway name" value="Acyl chain remodelling of PE"/>
</dbReference>
<dbReference type="Reactome" id="R-HSA-1482922">
    <property type="pathway name" value="Acyl chain remodelling of PI"/>
</dbReference>
<dbReference type="Reactome" id="R-HSA-1482925">
    <property type="pathway name" value="Acyl chain remodelling of PG"/>
</dbReference>
<dbReference type="Reactome" id="R-HSA-1483166">
    <property type="pathway name" value="Synthesis of PA"/>
</dbReference>
<dbReference type="SignaLink" id="Q9BZM1"/>
<dbReference type="BioGRID-ORCS" id="81579">
    <property type="hits" value="45 hits in 1121 CRISPR screens"/>
</dbReference>
<dbReference type="ChiTaRS" id="PLA2G12A">
    <property type="organism name" value="human"/>
</dbReference>
<dbReference type="GeneWiki" id="PLA2G12A"/>
<dbReference type="GenomeRNAi" id="81579"/>
<dbReference type="Pharos" id="Q9BZM1">
    <property type="development level" value="Tbio"/>
</dbReference>
<dbReference type="PRO" id="PR:Q9BZM1"/>
<dbReference type="Proteomes" id="UP000005640">
    <property type="component" value="Chromosome 4"/>
</dbReference>
<dbReference type="RNAct" id="Q9BZM1">
    <property type="molecule type" value="protein"/>
</dbReference>
<dbReference type="Bgee" id="ENSG00000123739">
    <property type="expression patterns" value="Expressed in oviduct epithelium and 194 other cell types or tissues"/>
</dbReference>
<dbReference type="ExpressionAtlas" id="Q9BZM1">
    <property type="expression patterns" value="baseline and differential"/>
</dbReference>
<dbReference type="GO" id="GO:0005737">
    <property type="term" value="C:cytoplasm"/>
    <property type="evidence" value="ECO:0007669"/>
    <property type="project" value="UniProtKB-SubCell"/>
</dbReference>
<dbReference type="GO" id="GO:0005576">
    <property type="term" value="C:extracellular region"/>
    <property type="evidence" value="ECO:0000304"/>
    <property type="project" value="Reactome"/>
</dbReference>
<dbReference type="GO" id="GO:0005509">
    <property type="term" value="F:calcium ion binding"/>
    <property type="evidence" value="ECO:0007669"/>
    <property type="project" value="InterPro"/>
</dbReference>
<dbReference type="GO" id="GO:0047498">
    <property type="term" value="F:calcium-dependent phospholipase A2 activity"/>
    <property type="evidence" value="ECO:0000303"/>
    <property type="project" value="UniProtKB"/>
</dbReference>
<dbReference type="GO" id="GO:0004623">
    <property type="term" value="F:phospholipase A2 activity"/>
    <property type="evidence" value="ECO:0000318"/>
    <property type="project" value="GO_Central"/>
</dbReference>
<dbReference type="GO" id="GO:0050482">
    <property type="term" value="P:arachidonate secretion"/>
    <property type="evidence" value="ECO:0007669"/>
    <property type="project" value="InterPro"/>
</dbReference>
<dbReference type="GO" id="GO:0016042">
    <property type="term" value="P:lipid catabolic process"/>
    <property type="evidence" value="ECO:0007669"/>
    <property type="project" value="UniProtKB-KW"/>
</dbReference>
<dbReference type="GO" id="GO:0006644">
    <property type="term" value="P:phospholipid metabolic process"/>
    <property type="evidence" value="ECO:0007669"/>
    <property type="project" value="InterPro"/>
</dbReference>
<dbReference type="FunFam" id="1.20.90.10:FF:000004">
    <property type="entry name" value="Group XIIA secretory phospholipase A2"/>
    <property type="match status" value="1"/>
</dbReference>
<dbReference type="Gene3D" id="1.20.90.10">
    <property type="entry name" value="Phospholipase A2 domain"/>
    <property type="match status" value="1"/>
</dbReference>
<dbReference type="InterPro" id="IPR010711">
    <property type="entry name" value="PLA2G12"/>
</dbReference>
<dbReference type="InterPro" id="IPR036444">
    <property type="entry name" value="PLipase_A2_dom_sf"/>
</dbReference>
<dbReference type="InterPro" id="IPR033113">
    <property type="entry name" value="PLipase_A2_His_AS"/>
</dbReference>
<dbReference type="PANTHER" id="PTHR12824">
    <property type="entry name" value="GROUP XII SECRETORY PHOSPHOLIPASE A2 FAMILY MEMBER"/>
    <property type="match status" value="1"/>
</dbReference>
<dbReference type="PANTHER" id="PTHR12824:SF7">
    <property type="entry name" value="GROUP XIIA SECRETORY PHOSPHOLIPASE A2"/>
    <property type="match status" value="1"/>
</dbReference>
<dbReference type="Pfam" id="PF06951">
    <property type="entry name" value="PLA2G12"/>
    <property type="match status" value="1"/>
</dbReference>
<dbReference type="SUPFAM" id="SSF48619">
    <property type="entry name" value="Phospholipase A2, PLA2"/>
    <property type="match status" value="1"/>
</dbReference>
<dbReference type="PROSITE" id="PS00118">
    <property type="entry name" value="PA2_HIS"/>
    <property type="match status" value="1"/>
</dbReference>
<protein>
    <recommendedName>
        <fullName>Group XIIA secretory phospholipase A2</fullName>
        <shortName>GXII sPLA2</shortName>
        <shortName>sPLA2-XII</shortName>
        <ecNumber>3.1.1.4</ecNumber>
    </recommendedName>
    <alternativeName>
        <fullName>Phosphatidylcholine 2-acylhydrolase 12A</fullName>
    </alternativeName>
</protein>
<accession>Q9BZM1</accession>
<accession>Q9BZ89</accession>